<protein>
    <recommendedName>
        <fullName>Chorion class B protein Ld34</fullName>
    </recommendedName>
</protein>
<proteinExistence type="evidence at transcript level"/>
<organism>
    <name type="scientific">Lymantria dispar</name>
    <name type="common">Gypsy moth</name>
    <name type="synonym">Porthetria dispar</name>
    <dbReference type="NCBI Taxonomy" id="13123"/>
    <lineage>
        <taxon>Eukaryota</taxon>
        <taxon>Metazoa</taxon>
        <taxon>Ecdysozoa</taxon>
        <taxon>Arthropoda</taxon>
        <taxon>Hexapoda</taxon>
        <taxon>Insecta</taxon>
        <taxon>Pterygota</taxon>
        <taxon>Neoptera</taxon>
        <taxon>Endopterygota</taxon>
        <taxon>Lepidoptera</taxon>
        <taxon>Glossata</taxon>
        <taxon>Ditrysia</taxon>
        <taxon>Noctuoidea</taxon>
        <taxon>Erebidae</taxon>
        <taxon>Lymantriinae</taxon>
        <taxon>Lymantria</taxon>
    </lineage>
</organism>
<reference key="1">
    <citation type="journal article" date="1994" name="J. Mol. Evol.">
        <title>Evolution of chorion gene families in lepidoptera: characterization of 15 cDNAs from the gypsy moth.</title>
        <authorList>
            <person name="Leclerc R.F."/>
            <person name="Regier J.C."/>
        </authorList>
    </citation>
    <scope>NUCLEOTIDE SEQUENCE [MRNA]</scope>
</reference>
<name>CHB3_LYMDI</name>
<evidence type="ECO:0000255" key="1"/>
<evidence type="ECO:0000305" key="2"/>
<dbReference type="EMBL" id="U04668">
    <property type="protein sequence ID" value="AAA67868.1"/>
    <property type="molecule type" value="mRNA"/>
</dbReference>
<dbReference type="GO" id="GO:0042600">
    <property type="term" value="C:egg chorion"/>
    <property type="evidence" value="ECO:0007669"/>
    <property type="project" value="InterPro"/>
</dbReference>
<dbReference type="GO" id="GO:0005213">
    <property type="term" value="F:structural constituent of egg chorion"/>
    <property type="evidence" value="ECO:0007669"/>
    <property type="project" value="InterPro"/>
</dbReference>
<dbReference type="GO" id="GO:0007304">
    <property type="term" value="P:chorion-containing eggshell formation"/>
    <property type="evidence" value="ECO:0007669"/>
    <property type="project" value="InterPro"/>
</dbReference>
<dbReference type="InterPro" id="IPR002635">
    <property type="entry name" value="Chorion"/>
</dbReference>
<dbReference type="Pfam" id="PF01723">
    <property type="entry name" value="Chorion_1"/>
    <property type="match status" value="1"/>
</dbReference>
<keyword id="KW-0677">Repeat</keyword>
<keyword id="KW-0732">Signal</keyword>
<comment type="function">
    <text>This protein is one of many from the eggshell of the gypsy moth.</text>
</comment>
<comment type="similarity">
    <text evidence="2">Belongs to the chorion protein family.</text>
</comment>
<sequence>MSAKIILVFCAQALFVQSALSQCTSRATVAADRGIIGGYGLGAPYGLAYGLEAPLGLGYGLGAPCGLGGPAIDITPTIGGGLPVSSASAIAPVGLAVASENVYEGILAAAGELPFVGTVGVEGVLPTAGAGAVHHSCGNGINAMASRDAAFAPGYAGAYGIGLGAYGLGVPALEVPALGYRAGWRGCGCGL</sequence>
<accession>P60607</accession>
<feature type="signal peptide" evidence="1">
    <location>
        <begin position="1"/>
        <end position="21"/>
    </location>
</feature>
<feature type="chain" id="PRO_0000005396" description="Chorion class B protein Ld34">
    <location>
        <begin position="22"/>
        <end position="191"/>
    </location>
</feature>